<proteinExistence type="evidence at protein level"/>
<name>SSPA_STAAM</name>
<gene>
    <name type="primary">sspA</name>
    <name type="ordered locus">SAV1048</name>
</gene>
<keyword id="KW-0002">3D-structure</keyword>
<keyword id="KW-0378">Hydrolase</keyword>
<keyword id="KW-0645">Protease</keyword>
<keyword id="KW-0677">Repeat</keyword>
<keyword id="KW-0964">Secreted</keyword>
<keyword id="KW-0720">Serine protease</keyword>
<keyword id="KW-0732">Signal</keyword>
<keyword id="KW-0843">Virulence</keyword>
<keyword id="KW-0865">Zymogen</keyword>
<accession>Q99V45</accession>
<comment type="function">
    <text evidence="1">Preferentially cleaves peptide bonds on the carboxyl-terminal side of aspartate and glutamate. Along with other extracellular proteases it is involved in colonization and infection of human tissues. Required for proteolytic maturation of thiol protease SspB and inactivation of SspC, an inhibitor of SspB. It is the most important protease for degradation of fibronectin-binding protein (FnBP) and surface protein A, which are involved in adherence to host cells. May also protect bacteria against host defense mechanism by cleaving the immunoglobulin classes IgG, IgA and IgM. May be involved in the stability of secreted lipases (By similarity).</text>
</comment>
<comment type="catalytic activity">
    <reaction evidence="3">
        <text>Preferential cleavage: Glu-|-Xaa, Asp-|-Xaa.</text>
        <dbReference type="EC" id="3.4.21.19"/>
    </reaction>
</comment>
<comment type="subcellular location">
    <subcellularLocation>
        <location evidence="1">Secreted</location>
    </subcellularLocation>
</comment>
<comment type="PTM">
    <text evidence="1">Proteolytically cleaved by aureolysin (aur). This cleavage leads to the activation of SspA (By similarity).</text>
</comment>
<comment type="miscellaneous">
    <text evidence="1">The cascade of activation of extracellular proteases proceeds from the metalloprotease aureolysin (aur), through SspA to SspB.</text>
</comment>
<comment type="similarity">
    <text evidence="5">Belongs to the peptidase S1B family.</text>
</comment>
<feature type="signal peptide" evidence="2">
    <location>
        <begin position="1"/>
        <end position="29"/>
    </location>
</feature>
<feature type="propeptide" id="PRO_0000026886" evidence="1">
    <location>
        <begin position="30"/>
        <end position="68"/>
    </location>
</feature>
<feature type="chain" id="PRO_0000026887" description="Glutamyl endopeptidase">
    <location>
        <begin position="69"/>
        <end position="342"/>
    </location>
</feature>
<feature type="repeat" description="1">
    <location>
        <begin position="289"/>
        <end position="291"/>
    </location>
</feature>
<feature type="repeat" description="2">
    <location>
        <begin position="292"/>
        <end position="294"/>
    </location>
</feature>
<feature type="repeat" description="3">
    <location>
        <begin position="295"/>
        <end position="297"/>
    </location>
</feature>
<feature type="repeat" description="4">
    <location>
        <begin position="298"/>
        <end position="300"/>
    </location>
</feature>
<feature type="repeat" description="5">
    <location>
        <begin position="301"/>
        <end position="303"/>
    </location>
</feature>
<feature type="repeat" description="6">
    <location>
        <begin position="304"/>
        <end position="306"/>
    </location>
</feature>
<feature type="repeat" description="7">
    <location>
        <begin position="307"/>
        <end position="309"/>
    </location>
</feature>
<feature type="repeat" description="8">
    <location>
        <begin position="310"/>
        <end position="312"/>
    </location>
</feature>
<feature type="repeat" description="9">
    <location>
        <begin position="316"/>
        <end position="318"/>
    </location>
</feature>
<feature type="repeat" description="10">
    <location>
        <begin position="319"/>
        <end position="321"/>
    </location>
</feature>
<feature type="repeat" description="11">
    <location>
        <begin position="322"/>
        <end position="324"/>
    </location>
</feature>
<feature type="repeat" description="12">
    <location>
        <begin position="325"/>
        <end position="327"/>
    </location>
</feature>
<feature type="repeat" description="13">
    <location>
        <begin position="328"/>
        <end position="330"/>
    </location>
</feature>
<feature type="region of interest" description="Disordered" evidence="4">
    <location>
        <begin position="33"/>
        <end position="63"/>
    </location>
</feature>
<feature type="region of interest" description="Disordered" evidence="4">
    <location>
        <begin position="283"/>
        <end position="342"/>
    </location>
</feature>
<feature type="region of interest" description="13 X 3 AA repeats of P-[DN]-N">
    <location>
        <begin position="289"/>
        <end position="330"/>
    </location>
</feature>
<feature type="compositionally biased region" description="Low complexity" evidence="4">
    <location>
        <begin position="39"/>
        <end position="50"/>
    </location>
</feature>
<feature type="compositionally biased region" description="Low complexity" evidence="4">
    <location>
        <begin position="286"/>
        <end position="342"/>
    </location>
</feature>
<feature type="active site" description="Charge relay system">
    <location>
        <position position="119"/>
    </location>
</feature>
<feature type="active site" description="Charge relay system">
    <location>
        <position position="161"/>
    </location>
</feature>
<feature type="active site" description="Charge relay system">
    <location>
        <position position="237"/>
    </location>
</feature>
<feature type="site" description="Cleavage; by aureolysin" evidence="1">
    <location>
        <begin position="68"/>
        <end position="69"/>
    </location>
</feature>
<feature type="strand" evidence="6">
    <location>
        <begin position="76"/>
        <end position="81"/>
    </location>
</feature>
<feature type="helix" evidence="6">
    <location>
        <begin position="85"/>
        <end position="87"/>
    </location>
</feature>
<feature type="strand" evidence="6">
    <location>
        <begin position="90"/>
        <end position="97"/>
    </location>
</feature>
<feature type="strand" evidence="6">
    <location>
        <begin position="100"/>
        <end position="110"/>
    </location>
</feature>
<feature type="strand" evidence="6">
    <location>
        <begin position="113"/>
        <end position="116"/>
    </location>
</feature>
<feature type="helix" evidence="6">
    <location>
        <begin position="118"/>
        <end position="122"/>
    </location>
</feature>
<feature type="turn" evidence="6">
    <location>
        <begin position="123"/>
        <end position="126"/>
    </location>
</feature>
<feature type="helix" evidence="6">
    <location>
        <begin position="128"/>
        <end position="130"/>
    </location>
</feature>
<feature type="strand" evidence="6">
    <location>
        <begin position="131"/>
        <end position="135"/>
    </location>
</feature>
<feature type="strand" evidence="6">
    <location>
        <begin position="148"/>
        <end position="155"/>
    </location>
</feature>
<feature type="strand" evidence="6">
    <location>
        <begin position="157"/>
        <end position="160"/>
    </location>
</feature>
<feature type="strand" evidence="6">
    <location>
        <begin position="163"/>
        <end position="167"/>
    </location>
</feature>
<feature type="turn" evidence="6">
    <location>
        <begin position="176"/>
        <end position="178"/>
    </location>
</feature>
<feature type="strand" evidence="6">
    <location>
        <begin position="196"/>
        <end position="201"/>
    </location>
</feature>
<feature type="strand" evidence="6">
    <location>
        <begin position="211"/>
        <end position="222"/>
    </location>
</feature>
<feature type="strand" evidence="6">
    <location>
        <begin position="225"/>
        <end position="229"/>
    </location>
</feature>
<feature type="strand" evidence="6">
    <location>
        <begin position="240"/>
        <end position="242"/>
    </location>
</feature>
<feature type="strand" evidence="6">
    <location>
        <begin position="248"/>
        <end position="256"/>
    </location>
</feature>
<feature type="turn" evidence="6">
    <location>
        <begin position="257"/>
        <end position="259"/>
    </location>
</feature>
<feature type="strand" evidence="6">
    <location>
        <begin position="260"/>
        <end position="265"/>
    </location>
</feature>
<feature type="helix" evidence="6">
    <location>
        <begin position="268"/>
        <end position="277"/>
    </location>
</feature>
<sequence length="342" mass="36977">MKGKFLKVSSLFVATLTTATLVSSPAANALSSKAMDNHPQQTQSSKQQTPKIKKGGNLKPLEQREHANVILPNNDRHQITDTTNGHYAPVTYIQVEAPTGTFIASGVVVGKDTLLTNKHVVDATHGDPHALKAFPSAINQDNYPNGGFTAEQITKYSGEGDLAIVKFSPNEQNKHIGEVVKPATMSNNAETQVNQNITVTGYPGDKPVATMWESKGKITYLKGEAMQYDLSTTGGNSGSPVFNEKNEVIGIHWGGVPNEFNGAVFINENVRNFLKQNIEDIHFANDDQPNNPDNPDNPNNPDNPNNPDNPNNPDEPNNPDNPNNPDNPDNGDNNNSDNPDAA</sequence>
<organism>
    <name type="scientific">Staphylococcus aureus (strain Mu50 / ATCC 700699)</name>
    <dbReference type="NCBI Taxonomy" id="158878"/>
    <lineage>
        <taxon>Bacteria</taxon>
        <taxon>Bacillati</taxon>
        <taxon>Bacillota</taxon>
        <taxon>Bacilli</taxon>
        <taxon>Bacillales</taxon>
        <taxon>Staphylococcaceae</taxon>
        <taxon>Staphylococcus</taxon>
    </lineage>
</organism>
<reference key="1">
    <citation type="journal article" date="2001" name="Lancet">
        <title>Whole genome sequencing of meticillin-resistant Staphylococcus aureus.</title>
        <authorList>
            <person name="Kuroda M."/>
            <person name="Ohta T."/>
            <person name="Uchiyama I."/>
            <person name="Baba T."/>
            <person name="Yuzawa H."/>
            <person name="Kobayashi I."/>
            <person name="Cui L."/>
            <person name="Oguchi A."/>
            <person name="Aoki K."/>
            <person name="Nagai Y."/>
            <person name="Lian J.-Q."/>
            <person name="Ito T."/>
            <person name="Kanamori M."/>
            <person name="Matsumaru H."/>
            <person name="Maruyama A."/>
            <person name="Murakami H."/>
            <person name="Hosoyama A."/>
            <person name="Mizutani-Ui Y."/>
            <person name="Takahashi N.K."/>
            <person name="Sawano T."/>
            <person name="Inoue R."/>
            <person name="Kaito C."/>
            <person name="Sekimizu K."/>
            <person name="Hirakawa H."/>
            <person name="Kuhara S."/>
            <person name="Goto S."/>
            <person name="Yabuzaki J."/>
            <person name="Kanehisa M."/>
            <person name="Yamashita A."/>
            <person name="Oshima K."/>
            <person name="Furuya K."/>
            <person name="Yoshino C."/>
            <person name="Shiba T."/>
            <person name="Hattori M."/>
            <person name="Ogasawara N."/>
            <person name="Hayashi H."/>
            <person name="Hiramatsu K."/>
        </authorList>
    </citation>
    <scope>NUCLEOTIDE SEQUENCE [LARGE SCALE GENOMIC DNA]</scope>
    <source>
        <strain>Mu50 / ATCC 700699</strain>
    </source>
</reference>
<reference key="2">
    <citation type="journal article" date="2004" name="Acta Crystallogr. D">
        <title>The structure of a universally employed enzyme: V8 protease from Staphylococcus aureus.</title>
        <authorList>
            <person name="Prasad L."/>
            <person name="Leduc Y."/>
            <person name="Hayakawa K."/>
            <person name="Delbaere L.T.J."/>
        </authorList>
    </citation>
    <scope>X-RAY CRYSTALLOGRAPHY (1.9 ANGSTROMS) OF 69-342</scope>
</reference>
<dbReference type="EC" id="3.4.21.19"/>
<dbReference type="EMBL" id="BA000017">
    <property type="protein sequence ID" value="BAB57210.1"/>
    <property type="molecule type" value="Genomic_DNA"/>
</dbReference>
<dbReference type="RefSeq" id="WP_000676539.1">
    <property type="nucleotide sequence ID" value="NC_002758.2"/>
</dbReference>
<dbReference type="PDB" id="1QY6">
    <property type="method" value="X-ray"/>
    <property type="resolution" value="1.90 A"/>
    <property type="chains" value="A=69-342"/>
</dbReference>
<dbReference type="PDB" id="2O8L">
    <property type="method" value="X-ray"/>
    <property type="resolution" value="1.50 A"/>
    <property type="chains" value="A=69-342"/>
</dbReference>
<dbReference type="PDBsum" id="1QY6"/>
<dbReference type="PDBsum" id="2O8L"/>
<dbReference type="SMR" id="Q99V45"/>
<dbReference type="MEROPS" id="S01.269"/>
<dbReference type="KEGG" id="sav:SAV1048"/>
<dbReference type="HOGENOM" id="CLU_073589_1_0_9"/>
<dbReference type="PhylomeDB" id="Q99V45"/>
<dbReference type="EvolutionaryTrace" id="Q99V45"/>
<dbReference type="PRO" id="PR:Q99V45"/>
<dbReference type="Proteomes" id="UP000002481">
    <property type="component" value="Chromosome"/>
</dbReference>
<dbReference type="GO" id="GO:0005576">
    <property type="term" value="C:extracellular region"/>
    <property type="evidence" value="ECO:0007669"/>
    <property type="project" value="UniProtKB-SubCell"/>
</dbReference>
<dbReference type="GO" id="GO:0004252">
    <property type="term" value="F:serine-type endopeptidase activity"/>
    <property type="evidence" value="ECO:0007669"/>
    <property type="project" value="InterPro"/>
</dbReference>
<dbReference type="GO" id="GO:0006508">
    <property type="term" value="P:proteolysis"/>
    <property type="evidence" value="ECO:0007669"/>
    <property type="project" value="UniProtKB-KW"/>
</dbReference>
<dbReference type="Gene3D" id="2.40.10.10">
    <property type="entry name" value="Trypsin-like serine proteases"/>
    <property type="match status" value="2"/>
</dbReference>
<dbReference type="InterPro" id="IPR050966">
    <property type="entry name" value="Glutamyl_endopeptidase"/>
</dbReference>
<dbReference type="InterPro" id="IPR009003">
    <property type="entry name" value="Peptidase_S1_PA"/>
</dbReference>
<dbReference type="InterPro" id="IPR043504">
    <property type="entry name" value="Peptidase_S1_PA_chymotrypsin"/>
</dbReference>
<dbReference type="InterPro" id="IPR008256">
    <property type="entry name" value="Peptidase_S1B"/>
</dbReference>
<dbReference type="InterPro" id="IPR008353">
    <property type="entry name" value="Peptidase_S1B_tx"/>
</dbReference>
<dbReference type="InterPro" id="IPR028301">
    <property type="entry name" value="V8_his_AS"/>
</dbReference>
<dbReference type="InterPro" id="IPR000126">
    <property type="entry name" value="V8_ser_AS"/>
</dbReference>
<dbReference type="PANTHER" id="PTHR15462">
    <property type="entry name" value="SERINE PROTEASE"/>
    <property type="match status" value="1"/>
</dbReference>
<dbReference type="PANTHER" id="PTHR15462:SF8">
    <property type="entry name" value="SERINE PROTEASE"/>
    <property type="match status" value="1"/>
</dbReference>
<dbReference type="Pfam" id="PF13365">
    <property type="entry name" value="Trypsin_2"/>
    <property type="match status" value="1"/>
</dbReference>
<dbReference type="PRINTS" id="PR01774">
    <property type="entry name" value="EXFOLTOXIN"/>
</dbReference>
<dbReference type="PRINTS" id="PR00839">
    <property type="entry name" value="V8PROTEASE"/>
</dbReference>
<dbReference type="SUPFAM" id="SSF50494">
    <property type="entry name" value="Trypsin-like serine proteases"/>
    <property type="match status" value="1"/>
</dbReference>
<dbReference type="PROSITE" id="PS00672">
    <property type="entry name" value="V8_HIS"/>
    <property type="match status" value="1"/>
</dbReference>
<dbReference type="PROSITE" id="PS00673">
    <property type="entry name" value="V8_SER"/>
    <property type="match status" value="1"/>
</dbReference>
<evidence type="ECO:0000250" key="1"/>
<evidence type="ECO:0000255" key="2"/>
<evidence type="ECO:0000255" key="3">
    <source>
        <dbReference type="PROSITE-ProRule" id="PRU10083"/>
    </source>
</evidence>
<evidence type="ECO:0000256" key="4">
    <source>
        <dbReference type="SAM" id="MobiDB-lite"/>
    </source>
</evidence>
<evidence type="ECO:0000305" key="5"/>
<evidence type="ECO:0007829" key="6">
    <source>
        <dbReference type="PDB" id="2O8L"/>
    </source>
</evidence>
<protein>
    <recommendedName>
        <fullName>Glutamyl endopeptidase</fullName>
        <ecNumber>3.4.21.19</ecNumber>
    </recommendedName>
    <alternativeName>
        <fullName>Endoproteinase Glu-C</fullName>
    </alternativeName>
    <alternativeName>
        <fullName>Staphylococcal serine proteinase</fullName>
    </alternativeName>
    <alternativeName>
        <fullName>V8 protease</fullName>
    </alternativeName>
    <alternativeName>
        <fullName>V8 proteinase</fullName>
    </alternativeName>
</protein>